<proteinExistence type="inferred from homology"/>
<reference key="1">
    <citation type="journal article" date="2011" name="J. Bacteriol.">
        <title>Comparative genomics of 28 Salmonella enterica isolates: evidence for CRISPR-mediated adaptive sublineage evolution.</title>
        <authorList>
            <person name="Fricke W.F."/>
            <person name="Mammel M.K."/>
            <person name="McDermott P.F."/>
            <person name="Tartera C."/>
            <person name="White D.G."/>
            <person name="Leclerc J.E."/>
            <person name="Ravel J."/>
            <person name="Cebula T.A."/>
        </authorList>
    </citation>
    <scope>NUCLEOTIDE SEQUENCE [LARGE SCALE GENOMIC DNA]</scope>
    <source>
        <strain>SL483</strain>
    </source>
</reference>
<organism>
    <name type="scientific">Salmonella agona (strain SL483)</name>
    <dbReference type="NCBI Taxonomy" id="454166"/>
    <lineage>
        <taxon>Bacteria</taxon>
        <taxon>Pseudomonadati</taxon>
        <taxon>Pseudomonadota</taxon>
        <taxon>Gammaproteobacteria</taxon>
        <taxon>Enterobacterales</taxon>
        <taxon>Enterobacteriaceae</taxon>
        <taxon>Salmonella</taxon>
    </lineage>
</organism>
<feature type="chain" id="PRO_1000190598" description="Imidazole glycerol phosphate synthase subunit HisF">
    <location>
        <begin position="1"/>
        <end position="258"/>
    </location>
</feature>
<feature type="active site" evidence="1">
    <location>
        <position position="11"/>
    </location>
</feature>
<feature type="active site" evidence="1">
    <location>
        <position position="130"/>
    </location>
</feature>
<gene>
    <name evidence="1" type="primary">hisF</name>
    <name type="ordered locus">SeAg_B2202</name>
</gene>
<protein>
    <recommendedName>
        <fullName evidence="1">Imidazole glycerol phosphate synthase subunit HisF</fullName>
        <ecNumber evidence="1">4.3.2.10</ecNumber>
    </recommendedName>
    <alternativeName>
        <fullName evidence="1">IGP synthase cyclase subunit</fullName>
    </alternativeName>
    <alternativeName>
        <fullName evidence="1">IGP synthase subunit HisF</fullName>
    </alternativeName>
    <alternativeName>
        <fullName evidence="1">ImGP synthase subunit HisF</fullName>
        <shortName evidence="1">IGPS subunit HisF</shortName>
    </alternativeName>
</protein>
<keyword id="KW-0028">Amino-acid biosynthesis</keyword>
<keyword id="KW-0963">Cytoplasm</keyword>
<keyword id="KW-0368">Histidine biosynthesis</keyword>
<keyword id="KW-0456">Lyase</keyword>
<dbReference type="EC" id="4.3.2.10" evidence="1"/>
<dbReference type="EMBL" id="CP001138">
    <property type="protein sequence ID" value="ACH51638.1"/>
    <property type="molecule type" value="Genomic_DNA"/>
</dbReference>
<dbReference type="RefSeq" id="WP_000880130.1">
    <property type="nucleotide sequence ID" value="NC_011149.1"/>
</dbReference>
<dbReference type="SMR" id="B5EX44"/>
<dbReference type="KEGG" id="sea:SeAg_B2202"/>
<dbReference type="HOGENOM" id="CLU_048577_4_0_6"/>
<dbReference type="UniPathway" id="UPA00031">
    <property type="reaction ID" value="UER00010"/>
</dbReference>
<dbReference type="Proteomes" id="UP000008819">
    <property type="component" value="Chromosome"/>
</dbReference>
<dbReference type="GO" id="GO:0005737">
    <property type="term" value="C:cytoplasm"/>
    <property type="evidence" value="ECO:0007669"/>
    <property type="project" value="UniProtKB-SubCell"/>
</dbReference>
<dbReference type="GO" id="GO:0000107">
    <property type="term" value="F:imidazoleglycerol-phosphate synthase activity"/>
    <property type="evidence" value="ECO:0007669"/>
    <property type="project" value="UniProtKB-UniRule"/>
</dbReference>
<dbReference type="GO" id="GO:0016829">
    <property type="term" value="F:lyase activity"/>
    <property type="evidence" value="ECO:0007669"/>
    <property type="project" value="UniProtKB-KW"/>
</dbReference>
<dbReference type="GO" id="GO:0000105">
    <property type="term" value="P:L-histidine biosynthetic process"/>
    <property type="evidence" value="ECO:0007669"/>
    <property type="project" value="UniProtKB-UniRule"/>
</dbReference>
<dbReference type="CDD" id="cd04731">
    <property type="entry name" value="HisF"/>
    <property type="match status" value="1"/>
</dbReference>
<dbReference type="FunFam" id="3.20.20.70:FF:000006">
    <property type="entry name" value="Imidazole glycerol phosphate synthase subunit HisF"/>
    <property type="match status" value="1"/>
</dbReference>
<dbReference type="Gene3D" id="3.20.20.70">
    <property type="entry name" value="Aldolase class I"/>
    <property type="match status" value="1"/>
</dbReference>
<dbReference type="HAMAP" id="MF_01013">
    <property type="entry name" value="HisF"/>
    <property type="match status" value="1"/>
</dbReference>
<dbReference type="InterPro" id="IPR013785">
    <property type="entry name" value="Aldolase_TIM"/>
</dbReference>
<dbReference type="InterPro" id="IPR006062">
    <property type="entry name" value="His_biosynth"/>
</dbReference>
<dbReference type="InterPro" id="IPR004651">
    <property type="entry name" value="HisF"/>
</dbReference>
<dbReference type="InterPro" id="IPR050064">
    <property type="entry name" value="IGPS_HisA/HisF"/>
</dbReference>
<dbReference type="InterPro" id="IPR011060">
    <property type="entry name" value="RibuloseP-bd_barrel"/>
</dbReference>
<dbReference type="NCBIfam" id="TIGR00735">
    <property type="entry name" value="hisF"/>
    <property type="match status" value="1"/>
</dbReference>
<dbReference type="PANTHER" id="PTHR21235:SF2">
    <property type="entry name" value="IMIDAZOLE GLYCEROL PHOSPHATE SYNTHASE HISHF"/>
    <property type="match status" value="1"/>
</dbReference>
<dbReference type="PANTHER" id="PTHR21235">
    <property type="entry name" value="IMIDAZOLE GLYCEROL PHOSPHATE SYNTHASE SUBUNIT HISF/H IGP SYNTHASE SUBUNIT HISF/H"/>
    <property type="match status" value="1"/>
</dbReference>
<dbReference type="Pfam" id="PF00977">
    <property type="entry name" value="His_biosynth"/>
    <property type="match status" value="1"/>
</dbReference>
<dbReference type="SUPFAM" id="SSF51366">
    <property type="entry name" value="Ribulose-phoshate binding barrel"/>
    <property type="match status" value="1"/>
</dbReference>
<sequence length="258" mass="28358">MLAKRIIPCLDVRDGQVVKGVQFRNHEIIGDIVPLAKRYADEGADELVFYDITASSDGRVVDKSWVARVAEVIDIPFCVAGGIRSIDDAAKILSFGADKISINSPALADSTLITRLADRFGVQCIVVGIDTWFDDATGKYHVNQYTGDENRTRVTQWETLDWVQEVQQRGAGEIVLNMMNQDGVRNGYDLTQLKKVRDVCRVPLIASGGAGTMEHFLEAFRDADVDGALAASVFHKQIINIGELKAYLAGQGVEIRIC</sequence>
<accession>B5EX44</accession>
<evidence type="ECO:0000255" key="1">
    <source>
        <dbReference type="HAMAP-Rule" id="MF_01013"/>
    </source>
</evidence>
<name>HIS6_SALA4</name>
<comment type="function">
    <text evidence="1">IGPS catalyzes the conversion of PRFAR and glutamine to IGP, AICAR and glutamate. The HisF subunit catalyzes the cyclization activity that produces IGP and AICAR from PRFAR using the ammonia provided by the HisH subunit.</text>
</comment>
<comment type="catalytic activity">
    <reaction evidence="1">
        <text>5-[(5-phospho-1-deoxy-D-ribulos-1-ylimino)methylamino]-1-(5-phospho-beta-D-ribosyl)imidazole-4-carboxamide + L-glutamine = D-erythro-1-(imidazol-4-yl)glycerol 3-phosphate + 5-amino-1-(5-phospho-beta-D-ribosyl)imidazole-4-carboxamide + L-glutamate + H(+)</text>
        <dbReference type="Rhea" id="RHEA:24793"/>
        <dbReference type="ChEBI" id="CHEBI:15378"/>
        <dbReference type="ChEBI" id="CHEBI:29985"/>
        <dbReference type="ChEBI" id="CHEBI:58278"/>
        <dbReference type="ChEBI" id="CHEBI:58359"/>
        <dbReference type="ChEBI" id="CHEBI:58475"/>
        <dbReference type="ChEBI" id="CHEBI:58525"/>
        <dbReference type="EC" id="4.3.2.10"/>
    </reaction>
</comment>
<comment type="pathway">
    <text evidence="1">Amino-acid biosynthesis; L-histidine biosynthesis; L-histidine from 5-phospho-alpha-D-ribose 1-diphosphate: step 5/9.</text>
</comment>
<comment type="subunit">
    <text evidence="1">Heterodimer of HisH and HisF.</text>
</comment>
<comment type="subcellular location">
    <subcellularLocation>
        <location evidence="1">Cytoplasm</location>
    </subcellularLocation>
</comment>
<comment type="similarity">
    <text evidence="1">Belongs to the HisA/HisF family.</text>
</comment>